<protein>
    <recommendedName>
        <fullName>Metallothionein-like protein 2A</fullName>
    </recommendedName>
    <alternativeName>
        <fullName>Class I metallothionein-like protein 2A</fullName>
    </alternativeName>
    <alternativeName>
        <fullName>OsMT-I-2a</fullName>
        <shortName>OsMT2a</shortName>
    </alternativeName>
    <alternativeName>
        <fullName>OsMT2-1</fullName>
    </alternativeName>
</protein>
<keyword id="KW-0479">Metal-binding</keyword>
<keyword id="KW-0480">Metal-thiolate cluster</keyword>
<keyword id="KW-1185">Reference proteome</keyword>
<keyword id="KW-0346">Stress response</keyword>
<reference key="1">
    <citation type="journal article" date="1996" name="Plant Mol. Biol.">
        <title>RNA expression patterns of a type 2 metallothionein-like gene from rice.</title>
        <authorList>
            <person name="Hsieh H.M."/>
            <person name="Liu W.K."/>
            <person name="Chang A."/>
            <person name="Huang P.C."/>
        </authorList>
    </citation>
    <scope>NUCLEOTIDE SEQUENCE [GENOMIC DNA / MRNA]</scope>
    <scope>INDUCTION</scope>
    <source>
        <strain>cv. Tainung 67</strain>
        <tissue>Root</tissue>
    </source>
</reference>
<reference key="2">
    <citation type="journal article" date="2002" name="Nature">
        <title>The genome sequence and structure of rice chromosome 1.</title>
        <authorList>
            <person name="Sasaki T."/>
            <person name="Matsumoto T."/>
            <person name="Yamamoto K."/>
            <person name="Sakata K."/>
            <person name="Baba T."/>
            <person name="Katayose Y."/>
            <person name="Wu J."/>
            <person name="Niimura Y."/>
            <person name="Cheng Z."/>
            <person name="Nagamura Y."/>
            <person name="Antonio B.A."/>
            <person name="Kanamori H."/>
            <person name="Hosokawa S."/>
            <person name="Masukawa M."/>
            <person name="Arikawa K."/>
            <person name="Chiden Y."/>
            <person name="Hayashi M."/>
            <person name="Okamoto M."/>
            <person name="Ando T."/>
            <person name="Aoki H."/>
            <person name="Arita K."/>
            <person name="Hamada M."/>
            <person name="Harada C."/>
            <person name="Hijishita S."/>
            <person name="Honda M."/>
            <person name="Ichikawa Y."/>
            <person name="Idonuma A."/>
            <person name="Iijima M."/>
            <person name="Ikeda M."/>
            <person name="Ikeno M."/>
            <person name="Ito S."/>
            <person name="Ito T."/>
            <person name="Ito Y."/>
            <person name="Ito Y."/>
            <person name="Iwabuchi A."/>
            <person name="Kamiya K."/>
            <person name="Karasawa W."/>
            <person name="Katagiri S."/>
            <person name="Kikuta A."/>
            <person name="Kobayashi N."/>
            <person name="Kono I."/>
            <person name="Machita K."/>
            <person name="Maehara T."/>
            <person name="Mizuno H."/>
            <person name="Mizubayashi T."/>
            <person name="Mukai Y."/>
            <person name="Nagasaki H."/>
            <person name="Nakashima M."/>
            <person name="Nakama Y."/>
            <person name="Nakamichi Y."/>
            <person name="Nakamura M."/>
            <person name="Namiki N."/>
            <person name="Negishi M."/>
            <person name="Ohta I."/>
            <person name="Ono N."/>
            <person name="Saji S."/>
            <person name="Sakai K."/>
            <person name="Shibata M."/>
            <person name="Shimokawa T."/>
            <person name="Shomura A."/>
            <person name="Song J."/>
            <person name="Takazaki Y."/>
            <person name="Terasawa K."/>
            <person name="Tsuji K."/>
            <person name="Waki K."/>
            <person name="Yamagata H."/>
            <person name="Yamane H."/>
            <person name="Yoshiki S."/>
            <person name="Yoshihara R."/>
            <person name="Yukawa K."/>
            <person name="Zhong H."/>
            <person name="Iwama H."/>
            <person name="Endo T."/>
            <person name="Ito H."/>
            <person name="Hahn J.H."/>
            <person name="Kim H.-I."/>
            <person name="Eun M.-Y."/>
            <person name="Yano M."/>
            <person name="Jiang J."/>
            <person name="Gojobori T."/>
        </authorList>
    </citation>
    <scope>NUCLEOTIDE SEQUENCE [LARGE SCALE GENOMIC DNA]</scope>
    <source>
        <strain>cv. Nipponbare</strain>
    </source>
</reference>
<reference key="3">
    <citation type="journal article" date="2005" name="Nature">
        <title>The map-based sequence of the rice genome.</title>
        <authorList>
            <consortium name="International rice genome sequencing project (IRGSP)"/>
        </authorList>
    </citation>
    <scope>NUCLEOTIDE SEQUENCE [LARGE SCALE GENOMIC DNA]</scope>
    <source>
        <strain>cv. Nipponbare</strain>
    </source>
</reference>
<reference key="4">
    <citation type="journal article" date="2008" name="Nucleic Acids Res.">
        <title>The rice annotation project database (RAP-DB): 2008 update.</title>
        <authorList>
            <consortium name="The rice annotation project (RAP)"/>
        </authorList>
    </citation>
    <scope>GENOME REANNOTATION</scope>
    <source>
        <strain>cv. Nipponbare</strain>
    </source>
</reference>
<reference key="5">
    <citation type="journal article" date="2013" name="Rice">
        <title>Improvement of the Oryza sativa Nipponbare reference genome using next generation sequence and optical map data.</title>
        <authorList>
            <person name="Kawahara Y."/>
            <person name="de la Bastide M."/>
            <person name="Hamilton J.P."/>
            <person name="Kanamori H."/>
            <person name="McCombie W.R."/>
            <person name="Ouyang S."/>
            <person name="Schwartz D.C."/>
            <person name="Tanaka T."/>
            <person name="Wu J."/>
            <person name="Zhou S."/>
            <person name="Childs K.L."/>
            <person name="Davidson R.M."/>
            <person name="Lin H."/>
            <person name="Quesada-Ocampo L."/>
            <person name="Vaillancourt B."/>
            <person name="Sakai H."/>
            <person name="Lee S.S."/>
            <person name="Kim J."/>
            <person name="Numa H."/>
            <person name="Itoh T."/>
            <person name="Buell C.R."/>
            <person name="Matsumoto T."/>
        </authorList>
    </citation>
    <scope>GENOME REANNOTATION</scope>
    <source>
        <strain>cv. Nipponbare</strain>
    </source>
</reference>
<reference key="6">
    <citation type="journal article" date="2005" name="PLoS Biol.">
        <title>The genomes of Oryza sativa: a history of duplications.</title>
        <authorList>
            <person name="Yu J."/>
            <person name="Wang J."/>
            <person name="Lin W."/>
            <person name="Li S."/>
            <person name="Li H."/>
            <person name="Zhou J."/>
            <person name="Ni P."/>
            <person name="Dong W."/>
            <person name="Hu S."/>
            <person name="Zeng C."/>
            <person name="Zhang J."/>
            <person name="Zhang Y."/>
            <person name="Li R."/>
            <person name="Xu Z."/>
            <person name="Li S."/>
            <person name="Li X."/>
            <person name="Zheng H."/>
            <person name="Cong L."/>
            <person name="Lin L."/>
            <person name="Yin J."/>
            <person name="Geng J."/>
            <person name="Li G."/>
            <person name="Shi J."/>
            <person name="Liu J."/>
            <person name="Lv H."/>
            <person name="Li J."/>
            <person name="Wang J."/>
            <person name="Deng Y."/>
            <person name="Ran L."/>
            <person name="Shi X."/>
            <person name="Wang X."/>
            <person name="Wu Q."/>
            <person name="Li C."/>
            <person name="Ren X."/>
            <person name="Wang J."/>
            <person name="Wang X."/>
            <person name="Li D."/>
            <person name="Liu D."/>
            <person name="Zhang X."/>
            <person name="Ji Z."/>
            <person name="Zhao W."/>
            <person name="Sun Y."/>
            <person name="Zhang Z."/>
            <person name="Bao J."/>
            <person name="Han Y."/>
            <person name="Dong L."/>
            <person name="Ji J."/>
            <person name="Chen P."/>
            <person name="Wu S."/>
            <person name="Liu J."/>
            <person name="Xiao Y."/>
            <person name="Bu D."/>
            <person name="Tan J."/>
            <person name="Yang L."/>
            <person name="Ye C."/>
            <person name="Zhang J."/>
            <person name="Xu J."/>
            <person name="Zhou Y."/>
            <person name="Yu Y."/>
            <person name="Zhang B."/>
            <person name="Zhuang S."/>
            <person name="Wei H."/>
            <person name="Liu B."/>
            <person name="Lei M."/>
            <person name="Yu H."/>
            <person name="Li Y."/>
            <person name="Xu H."/>
            <person name="Wei S."/>
            <person name="He X."/>
            <person name="Fang L."/>
            <person name="Zhang Z."/>
            <person name="Zhang Y."/>
            <person name="Huang X."/>
            <person name="Su Z."/>
            <person name="Tong W."/>
            <person name="Li J."/>
            <person name="Tong Z."/>
            <person name="Li S."/>
            <person name="Ye J."/>
            <person name="Wang L."/>
            <person name="Fang L."/>
            <person name="Lei T."/>
            <person name="Chen C.-S."/>
            <person name="Chen H.-C."/>
            <person name="Xu Z."/>
            <person name="Li H."/>
            <person name="Huang H."/>
            <person name="Zhang F."/>
            <person name="Xu H."/>
            <person name="Li N."/>
            <person name="Zhao C."/>
            <person name="Li S."/>
            <person name="Dong L."/>
            <person name="Huang Y."/>
            <person name="Li L."/>
            <person name="Xi Y."/>
            <person name="Qi Q."/>
            <person name="Li W."/>
            <person name="Zhang B."/>
            <person name="Hu W."/>
            <person name="Zhang Y."/>
            <person name="Tian X."/>
            <person name="Jiao Y."/>
            <person name="Liang X."/>
            <person name="Jin J."/>
            <person name="Gao L."/>
            <person name="Zheng W."/>
            <person name="Hao B."/>
            <person name="Liu S.-M."/>
            <person name="Wang W."/>
            <person name="Yuan L."/>
            <person name="Cao M."/>
            <person name="McDermott J."/>
            <person name="Samudrala R."/>
            <person name="Wang J."/>
            <person name="Wong G.K.-S."/>
            <person name="Yang H."/>
        </authorList>
    </citation>
    <scope>NUCLEOTIDE SEQUENCE [LARGE SCALE GENOMIC DNA]</scope>
    <source>
        <strain>cv. Nipponbare</strain>
    </source>
</reference>
<reference key="7">
    <citation type="submission" date="2006-10" db="EMBL/GenBank/DDBJ databases">
        <title>Oryza sativa full length cDNA.</title>
        <authorList>
            <consortium name="The rice full-length cDNA consortium"/>
        </authorList>
    </citation>
    <scope>NUCLEOTIDE SEQUENCE [LARGE SCALE MRNA]</scope>
    <source>
        <strain>cv. Nipponbare</strain>
    </source>
</reference>
<reference key="8">
    <citation type="journal article" date="2006" name="J. Biochem. Mol. Biol.">
        <title>Molecular analyses of the metallothionein gene family in rice (Oryza sativa L.).</title>
        <authorList>
            <person name="Zhou G."/>
            <person name="Xu Y."/>
            <person name="Li J."/>
            <person name="Yang L."/>
            <person name="Liu J.-Y."/>
        </authorList>
    </citation>
    <scope>GENE FAMILY</scope>
    <scope>TISSUE SPECIFICITY</scope>
</reference>
<proteinExistence type="evidence at transcript level"/>
<evidence type="ECO:0000269" key="1">
    <source>
    </source>
</evidence>
<evidence type="ECO:0000269" key="2">
    <source>
    </source>
</evidence>
<evidence type="ECO:0000305" key="3"/>
<evidence type="ECO:0000312" key="4">
    <source>
        <dbReference type="EMBL" id="EAZ10549.1"/>
    </source>
</evidence>
<name>MT2A_ORYSJ</name>
<organism>
    <name type="scientific">Oryza sativa subsp. japonica</name>
    <name type="common">Rice</name>
    <dbReference type="NCBI Taxonomy" id="39947"/>
    <lineage>
        <taxon>Eukaryota</taxon>
        <taxon>Viridiplantae</taxon>
        <taxon>Streptophyta</taxon>
        <taxon>Embryophyta</taxon>
        <taxon>Tracheophyta</taxon>
        <taxon>Spermatophyta</taxon>
        <taxon>Magnoliopsida</taxon>
        <taxon>Liliopsida</taxon>
        <taxon>Poales</taxon>
        <taxon>Poaceae</taxon>
        <taxon>BOP clade</taxon>
        <taxon>Oryzoideae</taxon>
        <taxon>Oryzeae</taxon>
        <taxon>Oryzinae</taxon>
        <taxon>Oryza</taxon>
        <taxon>Oryza sativa</taxon>
    </lineage>
</organism>
<feature type="chain" id="PRO_0000197407" description="Metallothionein-like protein 2A">
    <location>
        <begin position="1"/>
        <end position="82"/>
    </location>
</feature>
<accession>P94029</accession>
<accession>A2ZPA2</accession>
<accession>Q0JQN6</accession>
<accession>Q7F7X9</accession>
<dbReference type="EMBL" id="U43530">
    <property type="protein sequence ID" value="AAC49627.1"/>
    <property type="molecule type" value="mRNA"/>
</dbReference>
<dbReference type="EMBL" id="D89931">
    <property type="protein sequence ID" value="BAA14038.1"/>
    <property type="molecule type" value="Genomic_DNA"/>
</dbReference>
<dbReference type="EMBL" id="AP002540">
    <property type="protein sequence ID" value="BAB44010.1"/>
    <property type="molecule type" value="Genomic_DNA"/>
</dbReference>
<dbReference type="EMBL" id="AP008207">
    <property type="protein sequence ID" value="BAF03942.1"/>
    <property type="molecule type" value="Genomic_DNA"/>
</dbReference>
<dbReference type="EMBL" id="AP014957">
    <property type="protein sequence ID" value="BAS70408.1"/>
    <property type="molecule type" value="Genomic_DNA"/>
</dbReference>
<dbReference type="EMBL" id="CM000138">
    <property type="protein sequence ID" value="EAZ10549.1"/>
    <property type="molecule type" value="Genomic_DNA"/>
</dbReference>
<dbReference type="EMBL" id="AK243576">
    <property type="protein sequence ID" value="BAH01656.1"/>
    <property type="molecule type" value="mRNA"/>
</dbReference>
<dbReference type="PIR" id="T03727">
    <property type="entry name" value="T03727"/>
</dbReference>
<dbReference type="RefSeq" id="XP_015645115.1">
    <property type="nucleotide sequence ID" value="XM_015789629.1"/>
</dbReference>
<dbReference type="STRING" id="39947.P94029"/>
<dbReference type="PaxDb" id="39947-P94029"/>
<dbReference type="EnsemblPlants" id="Os01t0149800-01">
    <property type="protein sequence ID" value="Os01t0149800-01"/>
    <property type="gene ID" value="Os01g0149800"/>
</dbReference>
<dbReference type="Gramene" id="Os01t0149800-01">
    <property type="protein sequence ID" value="Os01t0149800-01"/>
    <property type="gene ID" value="Os01g0149800"/>
</dbReference>
<dbReference type="KEGG" id="dosa:Os01g0149800"/>
<dbReference type="eggNOG" id="KOG4738">
    <property type="taxonomic scope" value="Eukaryota"/>
</dbReference>
<dbReference type="HOGENOM" id="CLU_161105_1_0_1"/>
<dbReference type="InParanoid" id="P94029"/>
<dbReference type="OMA" id="APSNKGH"/>
<dbReference type="Proteomes" id="UP000000763">
    <property type="component" value="Chromosome 1"/>
</dbReference>
<dbReference type="Proteomes" id="UP000007752">
    <property type="component" value="Chromosome 1"/>
</dbReference>
<dbReference type="Proteomes" id="UP000059680">
    <property type="component" value="Chromosome 1"/>
</dbReference>
<dbReference type="GO" id="GO:0046872">
    <property type="term" value="F:metal ion binding"/>
    <property type="evidence" value="ECO:0007669"/>
    <property type="project" value="UniProtKB-KW"/>
</dbReference>
<dbReference type="InterPro" id="IPR000347">
    <property type="entry name" value="Metalthion_15p"/>
</dbReference>
<dbReference type="PANTHER" id="PTHR33543">
    <property type="entry name" value="METALLOTHIONEIN-LIKE PROTEIN 2A"/>
    <property type="match status" value="1"/>
</dbReference>
<dbReference type="PANTHER" id="PTHR33543:SF33">
    <property type="entry name" value="METALLOTHIONEIN-LIKE PROTEIN 2B"/>
    <property type="match status" value="1"/>
</dbReference>
<dbReference type="Pfam" id="PF01439">
    <property type="entry name" value="Metallothio_2"/>
    <property type="match status" value="1"/>
</dbReference>
<sequence>MSCCGGNCGCGSGCQCGSGCGGCKMYPEMAEEVTTTQTVIMGVAPSKGHAEGLEAGAAAGAGAENGCKCGDNCTCNPCNCGK</sequence>
<comment type="function">
    <text evidence="3">Metallothioneins have a high content of cysteine residues that bind various heavy metals.</text>
</comment>
<comment type="tissue specificity">
    <text evidence="1">Expressed in stems, leaves, rachis, inflorescences and seeds.</text>
</comment>
<comment type="induction">
    <text evidence="2">By sucrose starvation, heat shock and abscisic acid (ABA). Not induced by heavy metals.</text>
</comment>
<comment type="similarity">
    <text evidence="3">Belongs to the metallothionein superfamily. Type 15 family.</text>
</comment>
<gene>
    <name type="primary">MT2A</name>
    <name type="synonym">MT-2</name>
    <name type="ordered locus">Os01g0149800</name>
    <name type="ordered locus">LOC_Os01g05650</name>
    <name evidence="4" type="ORF">OsJ_00383</name>
    <name type="ORF">P0434B04.33</name>
</gene>